<protein>
    <recommendedName>
        <fullName>Guanine nucleotide-binding protein G(I)/G(S)/G(T) subunit beta-3</fullName>
    </recommendedName>
    <alternativeName>
        <fullName>Transducin beta chain 3</fullName>
    </alternativeName>
</protein>
<proteinExistence type="evidence at transcript level"/>
<gene>
    <name type="primary">GNB3</name>
</gene>
<keyword id="KW-0963">Cytoplasm</keyword>
<keyword id="KW-1185">Reference proteome</keyword>
<keyword id="KW-0677">Repeat</keyword>
<keyword id="KW-0807">Transducer</keyword>
<keyword id="KW-0853">WD repeat</keyword>
<sequence length="340" mass="37144">MGEMEQLRQEAEQLKKQIADARKACADTTLAELVSGLEVVGRVQMRTRRTLRGHLAKIYAMHWATDSKLLVSASQDGKLIVWDTYTTNKVHAIPLRSSWVMTCAYAPSGNFVACGGLDNMCSIYSLKSREGNVKVSRELSAHTGYLSCCRFLDDNNIVTSSGDTTCALWDIETGQQKTVFVGHTGDCMSLAVSPDFKLFISGACDASAKLWDVREGTCRQTFTGHESDINAICFFPNGEAICTGSDDASCRLFDLRADQELTAYSDESIICGITSVAFSLSGRLLFAGYDDFNCNIWDSMKGERVGILSGHDNRVSCLGVTADGMAVATGSWDSFLKVWN</sequence>
<organism>
    <name type="scientific">Canis lupus familiaris</name>
    <name type="common">Dog</name>
    <name type="synonym">Canis familiaris</name>
    <dbReference type="NCBI Taxonomy" id="9615"/>
    <lineage>
        <taxon>Eukaryota</taxon>
        <taxon>Metazoa</taxon>
        <taxon>Chordata</taxon>
        <taxon>Craniata</taxon>
        <taxon>Vertebrata</taxon>
        <taxon>Euteleostomi</taxon>
        <taxon>Mammalia</taxon>
        <taxon>Eutheria</taxon>
        <taxon>Laurasiatheria</taxon>
        <taxon>Carnivora</taxon>
        <taxon>Caniformia</taxon>
        <taxon>Canidae</taxon>
        <taxon>Canis</taxon>
    </lineage>
</organism>
<evidence type="ECO:0000250" key="1"/>
<evidence type="ECO:0000305" key="2"/>
<comment type="function">
    <text>Guanine nucleotide-binding proteins (G proteins) are involved as a modulator or transducer in various transmembrane signaling systems. The beta and gamma chains are required for the GTPase activity, for replacement of GDP by GTP, and for G protein-effector interaction.</text>
</comment>
<comment type="subunit">
    <text evidence="1">G proteins are composed of 3 units, alpha, beta and gamma. Interacts with RASD2 (By similarity).</text>
</comment>
<comment type="subcellular location">
    <subcellularLocation>
        <location evidence="1">Cytoplasm</location>
        <location evidence="1">Perinuclear region</location>
    </subcellularLocation>
</comment>
<comment type="similarity">
    <text evidence="2">Belongs to the WD repeat G protein beta family.</text>
</comment>
<reference key="1">
    <citation type="journal article" date="1997" name="Gene">
        <title>Structure and analysis of the transducin beta3-subunit gene, a candidate for inherited cone degeneration (cd) in the dog.</title>
        <authorList>
            <person name="Akhmedov N.B."/>
            <person name="Piriev N.I."/>
            <person name="Ray K."/>
            <person name="Acland G.M."/>
            <person name="Aguirre G.D."/>
            <person name="Farber D.B."/>
        </authorList>
    </citation>
    <scope>NUCLEOTIDE SEQUENCE [MRNA]</scope>
    <source>
        <strain>Alaskan malamute</strain>
        <tissue>Retina</tissue>
    </source>
</reference>
<reference key="2">
    <citation type="submission" date="2004-09" db="EMBL/GenBank/DDBJ databases">
        <title>Primary hypertension in dog is not associated with polymorphism in exon 9 of the GNB3 gene.</title>
        <authorList>
            <person name="Kuppinger O."/>
            <person name="Fischer E."/>
            <person name="Schulz R."/>
        </authorList>
    </citation>
    <scope>NUCLEOTIDE SEQUENCE [GENOMIC DNA]</scope>
</reference>
<reference key="3">
    <citation type="submission" date="2006-05" db="EMBL/GenBank/DDBJ databases">
        <title>GNB3 allele variance, primary hypertension and diabetes mellitus in dog.</title>
        <authorList>
            <person name="Kuppinger O."/>
            <person name="Fischer E."/>
            <person name="Ammer H."/>
        </authorList>
    </citation>
    <scope>NUCLEOTIDE SEQUENCE [MRNA]</scope>
    <source>
        <tissue>Blood</tissue>
    </source>
</reference>
<dbReference type="EMBL" id="U52916">
    <property type="protein sequence ID" value="AAC48760.1"/>
    <property type="molecule type" value="mRNA"/>
</dbReference>
<dbReference type="EMBL" id="AY751537">
    <property type="protein sequence ID" value="AAU95209.1"/>
    <property type="molecule type" value="Genomic_DNA"/>
</dbReference>
<dbReference type="EMBL" id="DQ672621">
    <property type="protein sequence ID" value="ABG57070.1"/>
    <property type="molecule type" value="mRNA"/>
</dbReference>
<dbReference type="RefSeq" id="NP_001003004.1">
    <property type="nucleotide sequence ID" value="NM_001003004.1"/>
</dbReference>
<dbReference type="SMR" id="P79147"/>
<dbReference type="FunCoup" id="P79147">
    <property type="interactions" value="282"/>
</dbReference>
<dbReference type="STRING" id="9615.ENSCAFP00000058821"/>
<dbReference type="PaxDb" id="9612-ENSCAFP00000021609"/>
<dbReference type="Ensembl" id="ENSCAFT00030040673.1">
    <property type="protein sequence ID" value="ENSCAFP00030035502.1"/>
    <property type="gene ID" value="ENSCAFG00030022113.1"/>
</dbReference>
<dbReference type="GeneID" id="403511"/>
<dbReference type="KEGG" id="cfa:403511"/>
<dbReference type="CTD" id="2784"/>
<dbReference type="eggNOG" id="KOG0286">
    <property type="taxonomic scope" value="Eukaryota"/>
</dbReference>
<dbReference type="InParanoid" id="P79147"/>
<dbReference type="OrthoDB" id="10255630at2759"/>
<dbReference type="Reactome" id="R-CFA-1296041">
    <property type="pathway name" value="Activation of G protein gated Potassium channels"/>
</dbReference>
<dbReference type="Reactome" id="R-CFA-202040">
    <property type="pathway name" value="G-protein activation"/>
</dbReference>
<dbReference type="Reactome" id="R-CFA-381676">
    <property type="pathway name" value="Glucagon-like Peptide-1 (GLP1) regulates insulin secretion"/>
</dbReference>
<dbReference type="Reactome" id="R-CFA-381771">
    <property type="pathway name" value="Synthesis, secretion, and inactivation of Glucagon-like Peptide-1 (GLP-1)"/>
</dbReference>
<dbReference type="Reactome" id="R-CFA-392170">
    <property type="pathway name" value="ADP signalling through P2Y purinoceptor 12"/>
</dbReference>
<dbReference type="Reactome" id="R-CFA-392451">
    <property type="pathway name" value="G beta:gamma signalling through PI3Kgamma"/>
</dbReference>
<dbReference type="Reactome" id="R-CFA-392851">
    <property type="pathway name" value="Prostacyclin signalling through prostacyclin receptor"/>
</dbReference>
<dbReference type="Reactome" id="R-CFA-400042">
    <property type="pathway name" value="Adrenaline,noradrenaline inhibits insulin secretion"/>
</dbReference>
<dbReference type="Reactome" id="R-CFA-4086398">
    <property type="pathway name" value="Ca2+ pathway"/>
</dbReference>
<dbReference type="Reactome" id="R-CFA-416476">
    <property type="pathway name" value="G alpha (q) signalling events"/>
</dbReference>
<dbReference type="Reactome" id="R-CFA-416482">
    <property type="pathway name" value="G alpha (12/13) signalling events"/>
</dbReference>
<dbReference type="Reactome" id="R-CFA-418217">
    <property type="pathway name" value="G beta:gamma signalling through PLC beta"/>
</dbReference>
<dbReference type="Reactome" id="R-CFA-418592">
    <property type="pathway name" value="ADP signalling through P2Y purinoceptor 1"/>
</dbReference>
<dbReference type="Reactome" id="R-CFA-418594">
    <property type="pathway name" value="G alpha (i) signalling events"/>
</dbReference>
<dbReference type="Reactome" id="R-CFA-418597">
    <property type="pathway name" value="G alpha (z) signalling events"/>
</dbReference>
<dbReference type="Reactome" id="R-CFA-420092">
    <property type="pathway name" value="Glucagon-type ligand receptors"/>
</dbReference>
<dbReference type="Reactome" id="R-CFA-428930">
    <property type="pathway name" value="Thromboxane signalling through TP receptor"/>
</dbReference>
<dbReference type="Reactome" id="R-CFA-432040">
    <property type="pathway name" value="Vasopressin regulates renal water homeostasis via Aquaporins"/>
</dbReference>
<dbReference type="Reactome" id="R-CFA-456926">
    <property type="pathway name" value="Thrombin signalling through proteinase activated receptors (PARs)"/>
</dbReference>
<dbReference type="Reactome" id="R-CFA-500657">
    <property type="pathway name" value="Presynaptic function of Kainate receptors"/>
</dbReference>
<dbReference type="Reactome" id="R-CFA-6814122">
    <property type="pathway name" value="Cooperation of PDCL (PhLP1) and TRiC/CCT in G-protein beta folding"/>
</dbReference>
<dbReference type="Reactome" id="R-CFA-8964315">
    <property type="pathway name" value="G beta:gamma signalling through BTK"/>
</dbReference>
<dbReference type="Reactome" id="R-CFA-8964616">
    <property type="pathway name" value="G beta:gamma signalling through CDC42"/>
</dbReference>
<dbReference type="Reactome" id="R-CFA-9009391">
    <property type="pathway name" value="Extra-nuclear estrogen signaling"/>
</dbReference>
<dbReference type="Reactome" id="R-CFA-9634597">
    <property type="pathway name" value="GPER1 signaling"/>
</dbReference>
<dbReference type="Reactome" id="R-CFA-9717207">
    <property type="pathway name" value="Sensory perception of sweet, bitter, and umami (glutamate) taste"/>
</dbReference>
<dbReference type="Reactome" id="R-CFA-9856530">
    <property type="pathway name" value="High laminar flow shear stress activates signaling by PIEZO1 and PECAM1:CDH5:KDR in endothelial cells"/>
</dbReference>
<dbReference type="Reactome" id="R-CFA-997272">
    <property type="pathway name" value="Inhibition of voltage gated Ca2+ channels via Gbeta/gamma subunits"/>
</dbReference>
<dbReference type="Proteomes" id="UP000002254">
    <property type="component" value="Unplaced"/>
</dbReference>
<dbReference type="Proteomes" id="UP000694429">
    <property type="component" value="Chromosome 27"/>
</dbReference>
<dbReference type="Proteomes" id="UP000694542">
    <property type="component" value="Unplaced"/>
</dbReference>
<dbReference type="Proteomes" id="UP000805418">
    <property type="component" value="Unplaced"/>
</dbReference>
<dbReference type="GO" id="GO:0005737">
    <property type="term" value="C:cytoplasm"/>
    <property type="evidence" value="ECO:0000318"/>
    <property type="project" value="GO_Central"/>
</dbReference>
<dbReference type="GO" id="GO:0005834">
    <property type="term" value="C:heterotrimeric G-protein complex"/>
    <property type="evidence" value="ECO:0000318"/>
    <property type="project" value="GO_Central"/>
</dbReference>
<dbReference type="GO" id="GO:0048471">
    <property type="term" value="C:perinuclear region of cytoplasm"/>
    <property type="evidence" value="ECO:0000250"/>
    <property type="project" value="UniProtKB"/>
</dbReference>
<dbReference type="GO" id="GO:0030159">
    <property type="term" value="F:signaling receptor complex adaptor activity"/>
    <property type="evidence" value="ECO:0000318"/>
    <property type="project" value="GO_Central"/>
</dbReference>
<dbReference type="GO" id="GO:0007186">
    <property type="term" value="P:G protein-coupled receptor signaling pathway"/>
    <property type="evidence" value="ECO:0000318"/>
    <property type="project" value="GO_Central"/>
</dbReference>
<dbReference type="CDD" id="cd00200">
    <property type="entry name" value="WD40"/>
    <property type="match status" value="1"/>
</dbReference>
<dbReference type="FunFam" id="2.130.10.10:FF:000007">
    <property type="entry name" value="Guanine nucleotide-binding protein G(I)/G(S)/G(T) subunit beta-1"/>
    <property type="match status" value="1"/>
</dbReference>
<dbReference type="Gene3D" id="2.130.10.10">
    <property type="entry name" value="YVTN repeat-like/Quinoprotein amine dehydrogenase"/>
    <property type="match status" value="1"/>
</dbReference>
<dbReference type="InterPro" id="IPR020472">
    <property type="entry name" value="G-protein_beta_WD-40_rep"/>
</dbReference>
<dbReference type="InterPro" id="IPR001632">
    <property type="entry name" value="Gprotein_B"/>
</dbReference>
<dbReference type="InterPro" id="IPR016346">
    <property type="entry name" value="Guanine_nucleotide-bd_bsu"/>
</dbReference>
<dbReference type="InterPro" id="IPR015943">
    <property type="entry name" value="WD40/YVTN_repeat-like_dom_sf"/>
</dbReference>
<dbReference type="InterPro" id="IPR019775">
    <property type="entry name" value="WD40_repeat_CS"/>
</dbReference>
<dbReference type="InterPro" id="IPR036322">
    <property type="entry name" value="WD40_repeat_dom_sf"/>
</dbReference>
<dbReference type="InterPro" id="IPR001680">
    <property type="entry name" value="WD40_rpt"/>
</dbReference>
<dbReference type="PANTHER" id="PTHR19850">
    <property type="entry name" value="GUANINE NUCLEOTIDE-BINDING PROTEIN BETA G PROTEIN BETA"/>
    <property type="match status" value="1"/>
</dbReference>
<dbReference type="Pfam" id="PF25391">
    <property type="entry name" value="WD40_Gbeta"/>
    <property type="match status" value="1"/>
</dbReference>
<dbReference type="PIRSF" id="PIRSF002394">
    <property type="entry name" value="GN-bd_beta"/>
    <property type="match status" value="1"/>
</dbReference>
<dbReference type="PRINTS" id="PR00319">
    <property type="entry name" value="GPROTEINB"/>
</dbReference>
<dbReference type="PRINTS" id="PR00320">
    <property type="entry name" value="GPROTEINBRPT"/>
</dbReference>
<dbReference type="SMART" id="SM00320">
    <property type="entry name" value="WD40"/>
    <property type="match status" value="7"/>
</dbReference>
<dbReference type="SUPFAM" id="SSF50978">
    <property type="entry name" value="WD40 repeat-like"/>
    <property type="match status" value="1"/>
</dbReference>
<dbReference type="PROSITE" id="PS00678">
    <property type="entry name" value="WD_REPEATS_1"/>
    <property type="match status" value="3"/>
</dbReference>
<dbReference type="PROSITE" id="PS50082">
    <property type="entry name" value="WD_REPEATS_2"/>
    <property type="match status" value="5"/>
</dbReference>
<dbReference type="PROSITE" id="PS50294">
    <property type="entry name" value="WD_REPEATS_REGION"/>
    <property type="match status" value="1"/>
</dbReference>
<accession>P79147</accession>
<accession>Q0PY31</accession>
<name>GBB3_CANLF</name>
<feature type="chain" id="PRO_0000127698" description="Guanine nucleotide-binding protein G(I)/G(S)/G(T) subunit beta-3">
    <location>
        <begin position="1"/>
        <end position="340"/>
    </location>
</feature>
<feature type="repeat" description="WD 1">
    <location>
        <begin position="53"/>
        <end position="83"/>
    </location>
</feature>
<feature type="repeat" description="WD 2">
    <location>
        <begin position="95"/>
        <end position="125"/>
    </location>
</feature>
<feature type="repeat" description="WD 3">
    <location>
        <begin position="141"/>
        <end position="170"/>
    </location>
</feature>
<feature type="repeat" description="WD 4">
    <location>
        <begin position="182"/>
        <end position="212"/>
    </location>
</feature>
<feature type="repeat" description="WD 5">
    <location>
        <begin position="224"/>
        <end position="254"/>
    </location>
</feature>
<feature type="repeat" description="WD 6">
    <location>
        <begin position="268"/>
        <end position="298"/>
    </location>
</feature>
<feature type="repeat" description="WD 7">
    <location>
        <begin position="310"/>
        <end position="340"/>
    </location>
</feature>